<dbReference type="EMBL" id="Z71255">
    <property type="protein sequence ID" value="CAA95002.1"/>
    <property type="molecule type" value="Genomic_DNA"/>
</dbReference>
<dbReference type="EMBL" id="Z49219">
    <property type="protein sequence ID" value="CAA89175.1"/>
    <property type="molecule type" value="Genomic_DNA"/>
</dbReference>
<dbReference type="EMBL" id="BK006949">
    <property type="protein sequence ID" value="DAA11479.1"/>
    <property type="molecule type" value="Genomic_DNA"/>
</dbReference>
<dbReference type="PIR" id="S54079">
    <property type="entry name" value="S54079"/>
</dbReference>
<dbReference type="RefSeq" id="NP_015382.1">
    <property type="nucleotide sequence ID" value="NM_001184154.1"/>
</dbReference>
<dbReference type="SMR" id="Q99177"/>
<dbReference type="BioGRID" id="36231">
    <property type="interactions" value="524"/>
</dbReference>
<dbReference type="DIP" id="DIP-6711N"/>
<dbReference type="FunCoup" id="Q99177">
    <property type="interactions" value="149"/>
</dbReference>
<dbReference type="IntAct" id="Q99177">
    <property type="interactions" value="3"/>
</dbReference>
<dbReference type="MINT" id="Q99177"/>
<dbReference type="STRING" id="4932.YPR057W"/>
<dbReference type="iPTMnet" id="Q99177"/>
<dbReference type="PaxDb" id="4932-YPR057W"/>
<dbReference type="PeptideAtlas" id="Q99177"/>
<dbReference type="EnsemblFungi" id="YPR057W_mRNA">
    <property type="protein sequence ID" value="YPR057W"/>
    <property type="gene ID" value="YPR057W"/>
</dbReference>
<dbReference type="GeneID" id="856170"/>
<dbReference type="KEGG" id="sce:YPR057W"/>
<dbReference type="AGR" id="SGD:S000006261"/>
<dbReference type="SGD" id="S000006261">
    <property type="gene designation" value="BRR1"/>
</dbReference>
<dbReference type="VEuPathDB" id="FungiDB:YPR057W"/>
<dbReference type="eggNOG" id="ENOG502S02X">
    <property type="taxonomic scope" value="Eukaryota"/>
</dbReference>
<dbReference type="HOGENOM" id="CLU_748374_0_0_1"/>
<dbReference type="InParanoid" id="Q99177"/>
<dbReference type="OMA" id="NEPSHSI"/>
<dbReference type="OrthoDB" id="428895at2759"/>
<dbReference type="BioCyc" id="YEAST:G3O-34209-MONOMER"/>
<dbReference type="BioGRID-ORCS" id="856170">
    <property type="hits" value="0 hits in 10 CRISPR screens"/>
</dbReference>
<dbReference type="PRO" id="PR:Q99177"/>
<dbReference type="Proteomes" id="UP000002311">
    <property type="component" value="Chromosome XVI"/>
</dbReference>
<dbReference type="RNAct" id="Q99177">
    <property type="molecule type" value="protein"/>
</dbReference>
<dbReference type="GO" id="GO:0030532">
    <property type="term" value="C:small nuclear ribonucleoprotein complex"/>
    <property type="evidence" value="ECO:0000314"/>
    <property type="project" value="SGD"/>
</dbReference>
<dbReference type="GO" id="GO:0005681">
    <property type="term" value="C:spliceosomal complex"/>
    <property type="evidence" value="ECO:0007669"/>
    <property type="project" value="UniProtKB-KW"/>
</dbReference>
<dbReference type="GO" id="GO:0017069">
    <property type="term" value="F:snRNA binding"/>
    <property type="evidence" value="ECO:0000314"/>
    <property type="project" value="SGD"/>
</dbReference>
<dbReference type="GO" id="GO:0000245">
    <property type="term" value="P:spliceosomal complex assembly"/>
    <property type="evidence" value="ECO:0000315"/>
    <property type="project" value="SGD"/>
</dbReference>
<dbReference type="GO" id="GO:0000387">
    <property type="term" value="P:spliceosomal snRNP assembly"/>
    <property type="evidence" value="ECO:0007669"/>
    <property type="project" value="InterPro"/>
</dbReference>
<dbReference type="FunFam" id="1.20.58.1070:FF:000003">
    <property type="entry name" value="Spliceosomal snRNP component"/>
    <property type="match status" value="1"/>
</dbReference>
<dbReference type="Gene3D" id="1.20.58.1070">
    <property type="match status" value="1"/>
</dbReference>
<dbReference type="InterPro" id="IPR023251">
    <property type="entry name" value="Brr1"/>
</dbReference>
<dbReference type="InterPro" id="IPR035426">
    <property type="entry name" value="Gemin2/Brr1"/>
</dbReference>
<dbReference type="Pfam" id="PF04938">
    <property type="entry name" value="SIP1"/>
    <property type="match status" value="1"/>
</dbReference>
<dbReference type="PRINTS" id="PR02039">
    <property type="entry name" value="SPLICEFRBRR1"/>
</dbReference>
<organism>
    <name type="scientific">Saccharomyces cerevisiae (strain ATCC 204508 / S288c)</name>
    <name type="common">Baker's yeast</name>
    <dbReference type="NCBI Taxonomy" id="559292"/>
    <lineage>
        <taxon>Eukaryota</taxon>
        <taxon>Fungi</taxon>
        <taxon>Dikarya</taxon>
        <taxon>Ascomycota</taxon>
        <taxon>Saccharomycotina</taxon>
        <taxon>Saccharomycetes</taxon>
        <taxon>Saccharomycetales</taxon>
        <taxon>Saccharomycetaceae</taxon>
        <taxon>Saccharomyces</taxon>
    </lineage>
</organism>
<evidence type="ECO:0000269" key="1">
    <source>
    </source>
</evidence>
<evidence type="ECO:0000269" key="2">
    <source>
    </source>
</evidence>
<evidence type="ECO:0000269" key="3">
    <source>
    </source>
</evidence>
<evidence type="ECO:0000269" key="4">
    <source>
    </source>
</evidence>
<evidence type="ECO:0000269" key="5">
    <source>
    </source>
</evidence>
<evidence type="ECO:0000269" key="6">
    <source>
    </source>
</evidence>
<evidence type="ECO:0000305" key="7"/>
<reference key="1">
    <citation type="journal article" date="1996" name="EMBO J.">
        <title>Transcriptional pulse-chase analysis reveals a role for a novel snRNP-associated protein in the manufacture of spliceosomal snRNPs.</title>
        <authorList>
            <person name="Noble S.M."/>
            <person name="Guthrie C."/>
        </authorList>
    </citation>
    <scope>NUCLEOTIDE SEQUENCE [GENOMIC DNA]</scope>
    <scope>FUNCTION</scope>
    <scope>ASSOCIATION WITH THE SPLICEOSOME</scope>
</reference>
<reference key="2">
    <citation type="journal article" date="1997" name="Nature">
        <title>The nucleotide sequence of Saccharomyces cerevisiae chromosome XVI.</title>
        <authorList>
            <person name="Bussey H."/>
            <person name="Storms R.K."/>
            <person name="Ahmed A."/>
            <person name="Albermann K."/>
            <person name="Allen E."/>
            <person name="Ansorge W."/>
            <person name="Araujo R."/>
            <person name="Aparicio A."/>
            <person name="Barrell B.G."/>
            <person name="Badcock K."/>
            <person name="Benes V."/>
            <person name="Botstein D."/>
            <person name="Bowman S."/>
            <person name="Brueckner M."/>
            <person name="Carpenter J."/>
            <person name="Cherry J.M."/>
            <person name="Chung E."/>
            <person name="Churcher C.M."/>
            <person name="Coster F."/>
            <person name="Davis K."/>
            <person name="Davis R.W."/>
            <person name="Dietrich F.S."/>
            <person name="Delius H."/>
            <person name="DiPaolo T."/>
            <person name="Dubois E."/>
            <person name="Duesterhoeft A."/>
            <person name="Duncan M."/>
            <person name="Floeth M."/>
            <person name="Fortin N."/>
            <person name="Friesen J.D."/>
            <person name="Fritz C."/>
            <person name="Goffeau A."/>
            <person name="Hall J."/>
            <person name="Hebling U."/>
            <person name="Heumann K."/>
            <person name="Hilbert H."/>
            <person name="Hillier L.W."/>
            <person name="Hunicke-Smith S."/>
            <person name="Hyman R.W."/>
            <person name="Johnston M."/>
            <person name="Kalman S."/>
            <person name="Kleine K."/>
            <person name="Komp C."/>
            <person name="Kurdi O."/>
            <person name="Lashkari D."/>
            <person name="Lew H."/>
            <person name="Lin A."/>
            <person name="Lin D."/>
            <person name="Louis E.J."/>
            <person name="Marathe R."/>
            <person name="Messenguy F."/>
            <person name="Mewes H.-W."/>
            <person name="Mirtipati S."/>
            <person name="Moestl D."/>
            <person name="Mueller-Auer S."/>
            <person name="Namath A."/>
            <person name="Nentwich U."/>
            <person name="Oefner P."/>
            <person name="Pearson D."/>
            <person name="Petel F.X."/>
            <person name="Pohl T.M."/>
            <person name="Purnelle B."/>
            <person name="Rajandream M.A."/>
            <person name="Rechmann S."/>
            <person name="Rieger M."/>
            <person name="Riles L."/>
            <person name="Roberts D."/>
            <person name="Schaefer M."/>
            <person name="Scharfe M."/>
            <person name="Scherens B."/>
            <person name="Schramm S."/>
            <person name="Schroeder M."/>
            <person name="Sdicu A.-M."/>
            <person name="Tettelin H."/>
            <person name="Urrestarazu L.A."/>
            <person name="Ushinsky S."/>
            <person name="Vierendeels F."/>
            <person name="Vissers S."/>
            <person name="Voss H."/>
            <person name="Walsh S.V."/>
            <person name="Wambutt R."/>
            <person name="Wang Y."/>
            <person name="Wedler E."/>
            <person name="Wedler H."/>
            <person name="Winnett E."/>
            <person name="Zhong W.-W."/>
            <person name="Zollner A."/>
            <person name="Vo D.H."/>
            <person name="Hani J."/>
        </authorList>
    </citation>
    <scope>NUCLEOTIDE SEQUENCE [LARGE SCALE GENOMIC DNA]</scope>
    <source>
        <strain>ATCC 204508 / S288c</strain>
    </source>
</reference>
<reference key="3">
    <citation type="journal article" date="2014" name="G3 (Bethesda)">
        <title>The reference genome sequence of Saccharomyces cerevisiae: Then and now.</title>
        <authorList>
            <person name="Engel S.R."/>
            <person name="Dietrich F.S."/>
            <person name="Fisk D.G."/>
            <person name="Binkley G."/>
            <person name="Balakrishnan R."/>
            <person name="Costanzo M.C."/>
            <person name="Dwight S.S."/>
            <person name="Hitz B.C."/>
            <person name="Karra K."/>
            <person name="Nash R.S."/>
            <person name="Weng S."/>
            <person name="Wong E.D."/>
            <person name="Lloyd P."/>
            <person name="Skrzypek M.S."/>
            <person name="Miyasato S.R."/>
            <person name="Simison M."/>
            <person name="Cherry J.M."/>
        </authorList>
    </citation>
    <scope>GENOME REANNOTATION</scope>
    <source>
        <strain>ATCC 204508 / S288c</strain>
    </source>
</reference>
<reference key="4">
    <citation type="journal article" date="1996" name="Genetics">
        <title>Identification of novel genes required for yeast pre-mRNA splicing by means of cold-sensitive mutations.</title>
        <authorList>
            <person name="Noble S.M."/>
            <person name="Guthrie C."/>
        </authorList>
    </citation>
    <scope>FUNCTION</scope>
</reference>
<reference key="5">
    <citation type="journal article" date="2003" name="Nature">
        <title>Global analysis of protein localization in budding yeast.</title>
        <authorList>
            <person name="Huh W.-K."/>
            <person name="Falvo J.V."/>
            <person name="Gerke L.C."/>
            <person name="Carroll A.S."/>
            <person name="Howson R.W."/>
            <person name="Weissman J.S."/>
            <person name="O'Shea E.K."/>
        </authorList>
    </citation>
    <scope>SUBCELLULAR LOCATION [LARGE SCALE ANALYSIS]</scope>
</reference>
<reference key="6">
    <citation type="journal article" date="2003" name="Nature">
        <title>Global analysis of protein expression in yeast.</title>
        <authorList>
            <person name="Ghaemmaghami S."/>
            <person name="Huh W.-K."/>
            <person name="Bower K."/>
            <person name="Howson R.W."/>
            <person name="Belle A."/>
            <person name="Dephoure N."/>
            <person name="O'Shea E.K."/>
            <person name="Weissman J.S."/>
        </authorList>
    </citation>
    <scope>LEVEL OF PROTEIN EXPRESSION [LARGE SCALE ANALYSIS]</scope>
</reference>
<reference key="7">
    <citation type="journal article" date="2005" name="Genetics">
        <title>Genetic analysis reveals a role for the C terminus of the Saccharomyces cerevisiae GTPase Snu114 during spliceosome activation.</title>
        <authorList>
            <person name="Brenner T.J."/>
            <person name="Guthrie C."/>
        </authorList>
    </citation>
    <scope>FUNCTION</scope>
</reference>
<reference key="8">
    <citation type="journal article" date="2006" name="Nature">
        <title>Proteome survey reveals modularity of the yeast cell machinery.</title>
        <authorList>
            <person name="Gavin A.-C."/>
            <person name="Aloy P."/>
            <person name="Grandi P."/>
            <person name="Krause R."/>
            <person name="Boesche M."/>
            <person name="Marzioch M."/>
            <person name="Rau C."/>
            <person name="Jensen L.J."/>
            <person name="Bastuck S."/>
            <person name="Duempelfeld B."/>
            <person name="Edelmann A."/>
            <person name="Heurtier M.-A."/>
            <person name="Hoffman V."/>
            <person name="Hoefert C."/>
            <person name="Klein K."/>
            <person name="Hudak M."/>
            <person name="Michon A.-M."/>
            <person name="Schelder M."/>
            <person name="Schirle M."/>
            <person name="Remor M."/>
            <person name="Rudi T."/>
            <person name="Hooper S."/>
            <person name="Bauer A."/>
            <person name="Bouwmeester T."/>
            <person name="Casari G."/>
            <person name="Drewes G."/>
            <person name="Neubauer G."/>
            <person name="Rick J.M."/>
            <person name="Kuster B."/>
            <person name="Bork P."/>
            <person name="Russell R.B."/>
            <person name="Superti-Furga G."/>
        </authorList>
    </citation>
    <scope>INTERACTION WITH HTA1</scope>
    <scope>ASSOCIATION WITH THE SPLICEOSOME</scope>
    <scope>IDENTIFICATION BY MASS SPECTROMETRY</scope>
</reference>
<comment type="function">
    <text evidence="3 5 6">Involved in mRNA splicing. Required for snRNA accumulation and manufacture of snRNPs.</text>
</comment>
<comment type="subunit">
    <text evidence="4">Interacts with HTA1 and associates with the spliceosome.</text>
</comment>
<comment type="subcellular location">
    <subcellularLocation>
        <location evidence="1">Nucleus</location>
    </subcellularLocation>
</comment>
<comment type="miscellaneous">
    <text evidence="2">Present with 1870 molecules/cell in log phase SD medium.</text>
</comment>
<comment type="similarity">
    <text evidence="7">Belongs to the BRR1 family.</text>
</comment>
<name>BRR1_YEAST</name>
<protein>
    <recommendedName>
        <fullName>Pre-mRNA-splicing factor BRR1</fullName>
    </recommendedName>
    <alternativeName>
        <fullName>Bad response to refrigeration protein 1</fullName>
    </alternativeName>
</protein>
<keyword id="KW-0507">mRNA processing</keyword>
<keyword id="KW-0508">mRNA splicing</keyword>
<keyword id="KW-0539">Nucleus</keyword>
<keyword id="KW-1185">Reference proteome</keyword>
<keyword id="KW-0747">Spliceosome</keyword>
<accession>Q99177</accession>
<accession>D6W463</accession>
<feature type="chain" id="PRO_0000239636" description="Pre-mRNA-splicing factor BRR1">
    <location>
        <begin position="1"/>
        <end position="341"/>
    </location>
</feature>
<sequence>MKRGESQAPDAIFGQSRAFALSDSSVNPDVIEYLKSVRQEALRTNAISIKNHMNLQKRTRHKSSMYDDEDEGALKRHAISPSLIRLQRNVEIWVRWFNSVKATVLTNAYEFTGYEDETLDLLLLFLKNYLEDMPSKCTTVEKIISVLNQHSFPEKAEEKEENLQIDEEWAKNILVRLEKTKIDSVEDVKKVITEGDKHELVGYNQWFQYLINNEPQHTTFHEKITSKQLWVLIKYMSNTWIKEIHKKGRHYRRLQDWLFYILVHTPERVTAEYTSILRDLGKKCLELIQKKPVEAHENKITLPKEMAELNVEIPAAVENMTITELTVSVIAVNYGQKDLIE</sequence>
<proteinExistence type="evidence at protein level"/>
<gene>
    <name type="primary">BRR1</name>
    <name type="ordered locus">YPR057W</name>
    <name type="ORF">YP9499.13</name>
</gene>